<proteinExistence type="inferred from homology"/>
<protein>
    <recommendedName>
        <fullName evidence="1">Circadian clock oscillator protein KaiB</fullName>
    </recommendedName>
</protein>
<feature type="chain" id="PRO_1000070464" description="Circadian clock oscillator protein KaiB">
    <location>
        <begin position="1"/>
        <end position="119"/>
    </location>
</feature>
<comment type="function">
    <text evidence="1">Key component of the KaiABC oscillator complex, which constitutes the main circadian regulator in cyanobacteria. Complex composition changes during the circadian cycle to control KaiC phosphorylation. KaiA stimulates KaiC autophosphorylation, while KaiB sequesters KaiA, leading to KaiC autodephosphorylation. Phospho-Ser-431 KaiC accumulation triggers binding of KaiB to form the KaiB(6):KaiC(6) complex, leading to changes in output regulators CikA and SasA. KaiB switches to a thioredoxin-like fold (KaiB(fs)) when bound to KaiC. KaiB(6):KaiC(6) formation exposes a site for KaiA binding that sequesters KaiA from KaiC, making the KaiC(6):KaiB(6):KaiA(12) complex that results in KaiC autodephosphorylation.</text>
</comment>
<comment type="function">
    <text evidence="1">A metamorphic protein which reversibly switches between an inactive tetrameric fold and a rare, thioredoxin-like monomeric fold (KaiB(fs)). KaiB(fs) binds phospho-KaiC, KaiA and CikA. KaiA and CikA compete for binding to KaiB(fs), and KaiB(fs) and SasA compete for binding to KaiC, thus the clock oscillator and output signal pathway are tightly coupled.</text>
</comment>
<comment type="subunit">
    <text evidence="1">The KaiABC complex composition changes during the circadian cycle to control KaiC phosphorylation. Complexes KaiC(6), KaiA(2-4):KaiC(6), KaiB(6):KaiC(6) and KaiC(6):KaiB(6):KaiA(12) are among the most important forms, many form cooperatively. Undergoes a major conformational rearrangment; in the free state forms homotetramers as a dimer of dimers. When bound to the CI domain of KaiC switches to a monomeric thioredoxin-fold (KaiB(fs)). KaiB(fs) binds CikA, leading it to dephosphorylate phospho-RpaA.</text>
</comment>
<comment type="domain">
    <text evidence="1">Has 2 forms, fold switches to a thioredoxin-like fold (KaiB(fs)) when bound to KaiC.</text>
</comment>
<comment type="similarity">
    <text evidence="1">Belongs to the KaiB family.</text>
</comment>
<name>KAIB_SYNS3</name>
<accession>Q0I803</accession>
<gene>
    <name evidence="1" type="primary">kaiB</name>
    <name type="ordered locus">sync_2221</name>
</gene>
<sequence>MSPRKTYILKLYVAGNTPNSMRALKTLRNILETEFKGVYALKVIDVLKNPQLAEEDKILATPTLSKILPPPVRRIIGDLSDRERVLIGLDLLYDELVDNDLNSSLMDALGVPDIEEADS</sequence>
<keyword id="KW-0090">Biological rhythms</keyword>
<keyword id="KW-1185">Reference proteome</keyword>
<evidence type="ECO:0000255" key="1">
    <source>
        <dbReference type="HAMAP-Rule" id="MF_01835"/>
    </source>
</evidence>
<dbReference type="EMBL" id="CP000435">
    <property type="protein sequence ID" value="ABI47337.1"/>
    <property type="molecule type" value="Genomic_DNA"/>
</dbReference>
<dbReference type="RefSeq" id="WP_011620131.1">
    <property type="nucleotide sequence ID" value="NC_008319.1"/>
</dbReference>
<dbReference type="SMR" id="Q0I803"/>
<dbReference type="STRING" id="64471.sync_2221"/>
<dbReference type="KEGG" id="syg:sync_2221"/>
<dbReference type="eggNOG" id="COG4251">
    <property type="taxonomic scope" value="Bacteria"/>
</dbReference>
<dbReference type="HOGENOM" id="CLU_144073_0_0_3"/>
<dbReference type="OrthoDB" id="5458519at2"/>
<dbReference type="Proteomes" id="UP000001961">
    <property type="component" value="Chromosome"/>
</dbReference>
<dbReference type="GO" id="GO:0007623">
    <property type="term" value="P:circadian rhythm"/>
    <property type="evidence" value="ECO:0007669"/>
    <property type="project" value="UniProtKB-UniRule"/>
</dbReference>
<dbReference type="CDD" id="cd02978">
    <property type="entry name" value="KaiB_like"/>
    <property type="match status" value="1"/>
</dbReference>
<dbReference type="Gene3D" id="3.40.30.10">
    <property type="entry name" value="Glutaredoxin"/>
    <property type="match status" value="1"/>
</dbReference>
<dbReference type="HAMAP" id="MF_01835">
    <property type="entry name" value="KaiB"/>
    <property type="match status" value="1"/>
</dbReference>
<dbReference type="InterPro" id="IPR013474">
    <property type="entry name" value="Circ_KaiB"/>
</dbReference>
<dbReference type="InterPro" id="IPR039022">
    <property type="entry name" value="KaiB-like"/>
</dbReference>
<dbReference type="InterPro" id="IPR011649">
    <property type="entry name" value="KaiB_domain"/>
</dbReference>
<dbReference type="InterPro" id="IPR036249">
    <property type="entry name" value="Thioredoxin-like_sf"/>
</dbReference>
<dbReference type="NCBIfam" id="TIGR02654">
    <property type="entry name" value="circ_KaiB"/>
    <property type="match status" value="1"/>
</dbReference>
<dbReference type="NCBIfam" id="NF006798">
    <property type="entry name" value="PRK09301.1"/>
    <property type="match status" value="1"/>
</dbReference>
<dbReference type="PANTHER" id="PTHR41709:SF2">
    <property type="entry name" value="CIRCADIAN CLOCK PROTEIN KAIB2"/>
    <property type="match status" value="1"/>
</dbReference>
<dbReference type="PANTHER" id="PTHR41709">
    <property type="entry name" value="KAIB-LIKE PROTEIN 1"/>
    <property type="match status" value="1"/>
</dbReference>
<dbReference type="Pfam" id="PF07689">
    <property type="entry name" value="KaiB"/>
    <property type="match status" value="1"/>
</dbReference>
<dbReference type="SMART" id="SM01248">
    <property type="entry name" value="KaiB"/>
    <property type="match status" value="1"/>
</dbReference>
<dbReference type="SUPFAM" id="SSF52833">
    <property type="entry name" value="Thioredoxin-like"/>
    <property type="match status" value="1"/>
</dbReference>
<reference key="1">
    <citation type="journal article" date="2006" name="Proc. Natl. Acad. Sci. U.S.A.">
        <title>Genome sequence of Synechococcus CC9311: insights into adaptation to a coastal environment.</title>
        <authorList>
            <person name="Palenik B."/>
            <person name="Ren Q."/>
            <person name="Dupont C.L."/>
            <person name="Myers G.S."/>
            <person name="Heidelberg J.F."/>
            <person name="Badger J.H."/>
            <person name="Madupu R."/>
            <person name="Nelson W.C."/>
            <person name="Brinkac L.M."/>
            <person name="Dodson R.J."/>
            <person name="Durkin A.S."/>
            <person name="Daugherty S.C."/>
            <person name="Sullivan S.A."/>
            <person name="Khouri H."/>
            <person name="Mohamoud Y."/>
            <person name="Halpin R."/>
            <person name="Paulsen I.T."/>
        </authorList>
    </citation>
    <scope>NUCLEOTIDE SEQUENCE [LARGE SCALE GENOMIC DNA]</scope>
    <source>
        <strain>CC9311</strain>
    </source>
</reference>
<organism>
    <name type="scientific">Synechococcus sp. (strain CC9311)</name>
    <dbReference type="NCBI Taxonomy" id="64471"/>
    <lineage>
        <taxon>Bacteria</taxon>
        <taxon>Bacillati</taxon>
        <taxon>Cyanobacteriota</taxon>
        <taxon>Cyanophyceae</taxon>
        <taxon>Synechococcales</taxon>
        <taxon>Synechococcaceae</taxon>
        <taxon>Synechococcus</taxon>
    </lineage>
</organism>